<sequence>MRTNCWWRLSGYVMRHRRDLLLGFGAALAGTVIAVLVPLVTKRVIDDAIAADHRPLAPWAVVLVAAAGATYLLMYVRRYYGGRIAHLVQHDLRMDAFQALLRWDGRQQDRWSSGQLIVRTTNDLQLVQALLFDVPNVLRHVLTLLLGVAVMTWLSVPLALLAVLLVPVIGLIAHRSRRLLAAATHCAQEHKAAVTGVVDAAVCGIRVVKAFGQEERETVKLVTASRALYAAQLRVARLNAHFGPLLQTLPALGQMAVFALGGWMAAQGSITVGTFVAFWACLTLLARPACDLAGMLTIAQQARAGAVRVLELIDSRPTLVDGTKPLSPEARLSLEFQRVSFGYVADRPVLREISLSVRAGETLAVVGAPGSGKSTLASLATRCYDVTQGAVRIGGQDVRELTLDSLRSAIGLVPEDAVLFSGTIGANIAYGRPDATPEQIATAARAAHIEEFVNTLPDGYQTAVGARGLTLSGGQRQRIALARALLHQPRLLIMDDPTSAVDAVIECGIQEVLREAIADRTAVIFTRRRSMLTLADRVAVLDSGRLLDVGTPDEVWERCPRYRELLSPAPDLADDLVVAERSPVCRPVAGLGTKAAQHTNVHNPGPHDHPPGPDPLRRLLREFRGPLALSLLLVAVQTCAGLLPPLLIRHGIDVGIRRHVLSALWWAALAGTATVVIRWVVQWGSAMVAGYTGEQVLFRLRSVVFAHAQRLGLDAFEDDGDAQIVTAVTADVEAIVAFLRTGLVVAVISVVTLVGILVALLAIRARLVLLIFTTMPVLALATWQFRRASNWTYRRARHRLGTVTATLREYAAGLRIAQAFRAEYRGLQSYFAHSDDYRRLGVRGQRLLALYYPFVALLCSLATTLVLLDGAREVRAGVISVGALVTYLLYIELLYTPIGELAQMFDDYQRAAVAAGRIRSLLSTRTPSSPAARPVGTLRGEVVFDAVHYSYRTREVPALAGINLRIPAGQTVVFVGSTGSGKSTLIKLVARFYDPTHGTVRVDGCDLREFDVDGYRNRLGIVTQEQYVFAGTVRDAIAYGRPDATDAQVERAAREVGAHPMITALDNGYLHQVTAGGRNLSAGQLQLLALARARLVDPDILLLDEATVALDPATEAVVQRATLTLAARRTTLIVAHGLAIAEHADRIVVLEHGTVVEDGAHTELLAAGGHYSRLWAAHTRLCSPEITQLQCIDA</sequence>
<keyword id="KW-0046">Antibiotic resistance</keyword>
<keyword id="KW-0067">ATP-binding</keyword>
<keyword id="KW-0997">Cell inner membrane</keyword>
<keyword id="KW-1003">Cell membrane</keyword>
<keyword id="KW-0472">Membrane</keyword>
<keyword id="KW-0547">Nucleotide-binding</keyword>
<keyword id="KW-1185">Reference proteome</keyword>
<keyword id="KW-0677">Repeat</keyword>
<keyword id="KW-1278">Translocase</keyword>
<keyword id="KW-0812">Transmembrane</keyword>
<keyword id="KW-1133">Transmembrane helix</keyword>
<keyword id="KW-0813">Transport</keyword>
<comment type="function">
    <text evidence="4">Overexpression in M.smegmatis increases resistance to erythromycin, ampicillin, novobiocin and vancomycin. It also reduces accumulation of ethidium bromide in the cell.</text>
</comment>
<comment type="activity regulation">
    <text evidence="4">Efflux is inhibited by reserpine.</text>
</comment>
<comment type="subcellular location">
    <subcellularLocation>
        <location evidence="5">Cell inner membrane</location>
        <topology evidence="1">Multi-pass membrane protein</topology>
    </subcellularLocation>
</comment>
<comment type="domain">
    <text evidence="5">The ATP-binding domains (NBD) and the transmembrane domains (TMD) are fused.</text>
</comment>
<comment type="similarity">
    <text evidence="5">Belongs to the ABC transporter superfamily. Lipid exporter (TC 3.A.1.106) family.</text>
</comment>
<feature type="chain" id="PRO_0000432861" description="Multidrug efflux ATP-binding/permease protein Rv0194">
    <location>
        <begin position="1"/>
        <end position="1194"/>
    </location>
</feature>
<feature type="transmembrane region" description="Helical" evidence="1">
    <location>
        <begin position="20"/>
        <end position="40"/>
    </location>
</feature>
<feature type="transmembrane region" description="Helical" evidence="1">
    <location>
        <begin position="56"/>
        <end position="76"/>
    </location>
</feature>
<feature type="transmembrane region" description="Helical" evidence="1">
    <location>
        <begin position="130"/>
        <end position="150"/>
    </location>
</feature>
<feature type="transmembrane region" description="Helical" evidence="1">
    <location>
        <begin position="153"/>
        <end position="173"/>
    </location>
</feature>
<feature type="transmembrane region" description="Helical" evidence="1">
    <location>
        <begin position="258"/>
        <end position="278"/>
    </location>
</feature>
<feature type="transmembrane region" description="Helical" evidence="1">
    <location>
        <begin position="279"/>
        <end position="299"/>
    </location>
</feature>
<feature type="transmembrane region" description="Helical" evidence="1">
    <location>
        <begin position="628"/>
        <end position="648"/>
    </location>
</feature>
<feature type="transmembrane region" description="Helical" evidence="1">
    <location>
        <begin position="660"/>
        <end position="680"/>
    </location>
</feature>
<feature type="transmembrane region" description="Helical" evidence="1">
    <location>
        <begin position="743"/>
        <end position="763"/>
    </location>
</feature>
<feature type="transmembrane region" description="Helical" evidence="1">
    <location>
        <begin position="765"/>
        <end position="785"/>
    </location>
</feature>
<feature type="transmembrane region" description="Helical" evidence="1">
    <location>
        <begin position="847"/>
        <end position="867"/>
    </location>
</feature>
<feature type="transmembrane region" description="Helical" evidence="1">
    <location>
        <begin position="878"/>
        <end position="898"/>
    </location>
</feature>
<feature type="domain" description="ABC transmembrane type-1 1" evidence="3">
    <location>
        <begin position="21"/>
        <end position="301"/>
    </location>
</feature>
<feature type="domain" description="ABC transporter 1" evidence="2">
    <location>
        <begin position="334"/>
        <end position="568"/>
    </location>
</feature>
<feature type="domain" description="ABC transmembrane type-1 2" evidence="3">
    <location>
        <begin position="628"/>
        <end position="910"/>
    </location>
</feature>
<feature type="domain" description="ABC transporter 2" evidence="2">
    <location>
        <begin position="942"/>
        <end position="1177"/>
    </location>
</feature>
<feature type="binding site" evidence="2">
    <location>
        <begin position="367"/>
        <end position="374"/>
    </location>
    <ligand>
        <name>ATP</name>
        <dbReference type="ChEBI" id="CHEBI:30616"/>
    </ligand>
</feature>
<feature type="binding site" evidence="2">
    <location>
        <begin position="976"/>
        <end position="983"/>
    </location>
    <ligand>
        <name>ATP</name>
        <dbReference type="ChEBI" id="CHEBI:30616"/>
    </ligand>
</feature>
<reference key="1">
    <citation type="journal article" date="1998" name="Nature">
        <title>Deciphering the biology of Mycobacterium tuberculosis from the complete genome sequence.</title>
        <authorList>
            <person name="Cole S.T."/>
            <person name="Brosch R."/>
            <person name="Parkhill J."/>
            <person name="Garnier T."/>
            <person name="Churcher C.M."/>
            <person name="Harris D.E."/>
            <person name="Gordon S.V."/>
            <person name="Eiglmeier K."/>
            <person name="Gas S."/>
            <person name="Barry C.E. III"/>
            <person name="Tekaia F."/>
            <person name="Badcock K."/>
            <person name="Basham D."/>
            <person name="Brown D."/>
            <person name="Chillingworth T."/>
            <person name="Connor R."/>
            <person name="Davies R.M."/>
            <person name="Devlin K."/>
            <person name="Feltwell T."/>
            <person name="Gentles S."/>
            <person name="Hamlin N."/>
            <person name="Holroyd S."/>
            <person name="Hornsby T."/>
            <person name="Jagels K."/>
            <person name="Krogh A."/>
            <person name="McLean J."/>
            <person name="Moule S."/>
            <person name="Murphy L.D."/>
            <person name="Oliver S."/>
            <person name="Osborne J."/>
            <person name="Quail M.A."/>
            <person name="Rajandream M.A."/>
            <person name="Rogers J."/>
            <person name="Rutter S."/>
            <person name="Seeger K."/>
            <person name="Skelton S."/>
            <person name="Squares S."/>
            <person name="Squares R."/>
            <person name="Sulston J.E."/>
            <person name="Taylor K."/>
            <person name="Whitehead S."/>
            <person name="Barrell B.G."/>
        </authorList>
    </citation>
    <scope>NUCLEOTIDE SEQUENCE [LARGE SCALE GENOMIC DNA]</scope>
    <source>
        <strain>ATCC 25618 / H37Rv</strain>
    </source>
</reference>
<reference key="2">
    <citation type="submission" date="2013-11" db="EMBL/GenBank/DDBJ databases">
        <title>The genome sequence of Mycobacterium tuberculosis H37Rv.</title>
        <authorList>
            <consortium name="The Broad Institute Genome Sequencing Platform"/>
            <person name="Galagan J."/>
            <person name="Kreiswirth B."/>
            <person name="Dobos K."/>
            <person name="Fortune S."/>
            <person name="Fitzgerald M."/>
            <person name="Young S.K."/>
            <person name="Zeng Q."/>
            <person name="Gargeya S."/>
            <person name="Abouelleil A."/>
            <person name="Alvarado L."/>
            <person name="Berlin A.M."/>
            <person name="Chapman S.B."/>
            <person name="Gainer-Dewar J."/>
            <person name="Goldberg J."/>
            <person name="Gnerre S."/>
            <person name="Griggs A."/>
            <person name="Gujja S."/>
            <person name="Hansen M."/>
            <person name="Howarth C."/>
            <person name="Imamovic A."/>
            <person name="Larimer J."/>
            <person name="McCowan C."/>
            <person name="Murphy C."/>
            <person name="Pearson M."/>
            <person name="Poon T."/>
            <person name="Priest M."/>
            <person name="Roberts A."/>
            <person name="Saif S."/>
            <person name="Shea T."/>
            <person name="Sykes S."/>
            <person name="Wortman J."/>
            <person name="Nusbaum C."/>
            <person name="Birren B."/>
        </authorList>
    </citation>
    <scope>NUCLEOTIDE SEQUENCE [LARGE SCALE GENOMIC DNA]</scope>
    <source>
        <strain>ATCC 25618 / H37Rv</strain>
    </source>
</reference>
<reference key="3">
    <citation type="submission" date="2014-04" db="EMBL/GenBank/DDBJ databases">
        <title>The genome sequence of Mycobacterium tuberculosis H37Rv.</title>
        <authorList>
            <consortium name="The Broad Institute Genomics Platform"/>
            <consortium name="The Broad Institute Genome Sequencing Center for Infectious Disease"/>
            <person name="Earl A.M."/>
            <person name="Kreiswirth B."/>
            <person name="Gomez J."/>
            <person name="Victor T."/>
            <person name="Desjardins C."/>
            <person name="Abeel T."/>
            <person name="Young S."/>
            <person name="Zeng Q."/>
            <person name="Gargeya S."/>
            <person name="Abouelleil A."/>
            <person name="Alvarado L."/>
            <person name="Chapman S.B."/>
            <person name="Gainer-Dewar J."/>
            <person name="Goldberg J."/>
            <person name="Griggs A."/>
            <person name="Gujja S."/>
            <person name="Hansen M."/>
            <person name="Howarth C."/>
            <person name="Imamovic A."/>
            <person name="Larimer J."/>
            <person name="Murphy C."/>
            <person name="Naylor J."/>
            <person name="Pearson M."/>
            <person name="Poon T.W."/>
            <person name="Priest M."/>
            <person name="Roberts A."/>
            <person name="Saif S."/>
            <person name="Shea T."/>
            <person name="Sykes S."/>
            <person name="Wortman J."/>
            <person name="Nusbaum C."/>
            <person name="Birren B."/>
        </authorList>
    </citation>
    <scope>NUCLEOTIDE SEQUENCE [LARGE SCALE GENOMIC DNA]</scope>
    <source>
        <strain>ATCC 25618 / H37Rv</strain>
    </source>
</reference>
<reference key="4">
    <citation type="journal article" date="2008" name="Antimicrob. Agents Chemother.">
        <title>Identification of a novel multidrug efflux pump of Mycobacterium tuberculosis.</title>
        <authorList>
            <person name="Danilchanka O."/>
            <person name="Mailaender C."/>
            <person name="Niederweis M."/>
        </authorList>
    </citation>
    <scope>FUNCTION IN ANTIBIOTIC RESISTANCE</scope>
    <scope>ACTIVITY REGULATION</scope>
    <source>
        <strain>H37Rv</strain>
    </source>
</reference>
<reference key="5">
    <citation type="journal article" date="2011" name="Mol. Cell. Proteomics">
        <title>Proteogenomic analysis of Mycobacterium tuberculosis by high resolution mass spectrometry.</title>
        <authorList>
            <person name="Kelkar D.S."/>
            <person name="Kumar D."/>
            <person name="Kumar P."/>
            <person name="Balakrishnan L."/>
            <person name="Muthusamy B."/>
            <person name="Yadav A.K."/>
            <person name="Shrivastava P."/>
            <person name="Marimuthu A."/>
            <person name="Anand S."/>
            <person name="Sundaram H."/>
            <person name="Kingsbury R."/>
            <person name="Harsha H.C."/>
            <person name="Nair B."/>
            <person name="Prasad T.S."/>
            <person name="Chauhan D.S."/>
            <person name="Katoch K."/>
            <person name="Katoch V.M."/>
            <person name="Kumar P."/>
            <person name="Chaerkady R."/>
            <person name="Ramachandran S."/>
            <person name="Dash D."/>
            <person name="Pandey A."/>
        </authorList>
    </citation>
    <scope>IDENTIFICATION BY MASS SPECTROMETRY [LARGE SCALE ANALYSIS]</scope>
    <source>
        <strain>ATCC 25618 / H37Rv</strain>
    </source>
</reference>
<organism>
    <name type="scientific">Mycobacterium tuberculosis (strain ATCC 25618 / H37Rv)</name>
    <dbReference type="NCBI Taxonomy" id="83332"/>
    <lineage>
        <taxon>Bacteria</taxon>
        <taxon>Bacillati</taxon>
        <taxon>Actinomycetota</taxon>
        <taxon>Actinomycetes</taxon>
        <taxon>Mycobacteriales</taxon>
        <taxon>Mycobacteriaceae</taxon>
        <taxon>Mycobacterium</taxon>
        <taxon>Mycobacterium tuberculosis complex</taxon>
    </lineage>
</organism>
<proteinExistence type="evidence at protein level"/>
<gene>
    <name evidence="7" type="ordered locus">Rv0194</name>
    <name evidence="6" type="ordered locus">RVBD_0194</name>
    <name evidence="8" type="ORF">P425_00203</name>
</gene>
<dbReference type="EC" id="7.6.2.-" evidence="5"/>
<dbReference type="EMBL" id="AL123456">
    <property type="protein sequence ID" value="CCP42922.1"/>
    <property type="molecule type" value="Genomic_DNA"/>
</dbReference>
<dbReference type="EMBL" id="CP003248">
    <property type="protein sequence ID" value="AFN48045.1"/>
    <property type="molecule type" value="Genomic_DNA"/>
</dbReference>
<dbReference type="EMBL" id="JLDD01000001">
    <property type="protein sequence ID" value="KBJ41303.1"/>
    <property type="molecule type" value="Genomic_DNA"/>
</dbReference>
<dbReference type="RefSeq" id="NP_214708.1">
    <property type="nucleotide sequence ID" value="NC_000962.3"/>
</dbReference>
<dbReference type="RefSeq" id="WP_003911097.1">
    <property type="nucleotide sequence ID" value="NZ_NVQJ01000001.1"/>
</dbReference>
<dbReference type="SMR" id="O53645"/>
<dbReference type="FunCoup" id="O53645">
    <property type="interactions" value="139"/>
</dbReference>
<dbReference type="STRING" id="83332.Rv0194"/>
<dbReference type="ChEMBL" id="CHEMBL3879861"/>
<dbReference type="TCDB" id="3.A.1.106.6">
    <property type="family name" value="the atp-binding cassette (abc) superfamily"/>
</dbReference>
<dbReference type="PaxDb" id="83332-Rv0194"/>
<dbReference type="GeneID" id="886790"/>
<dbReference type="KEGG" id="mtu:Rv0194"/>
<dbReference type="KEGG" id="mtv:RVBD_0194"/>
<dbReference type="PATRIC" id="fig|83332.111.peg.223"/>
<dbReference type="TubercuList" id="Rv0194"/>
<dbReference type="eggNOG" id="COG1132">
    <property type="taxonomic scope" value="Bacteria"/>
</dbReference>
<dbReference type="InParanoid" id="O53645"/>
<dbReference type="OrthoDB" id="9806127at2"/>
<dbReference type="PhylomeDB" id="O53645"/>
<dbReference type="Proteomes" id="UP000001584">
    <property type="component" value="Chromosome"/>
</dbReference>
<dbReference type="GO" id="GO:0009274">
    <property type="term" value="C:peptidoglycan-based cell wall"/>
    <property type="evidence" value="ECO:0007005"/>
    <property type="project" value="MTBBASE"/>
</dbReference>
<dbReference type="GO" id="GO:0005886">
    <property type="term" value="C:plasma membrane"/>
    <property type="evidence" value="ECO:0007005"/>
    <property type="project" value="MTBBASE"/>
</dbReference>
<dbReference type="GO" id="GO:0140359">
    <property type="term" value="F:ABC-type transporter activity"/>
    <property type="evidence" value="ECO:0007669"/>
    <property type="project" value="InterPro"/>
</dbReference>
<dbReference type="GO" id="GO:0005524">
    <property type="term" value="F:ATP binding"/>
    <property type="evidence" value="ECO:0007669"/>
    <property type="project" value="UniProtKB-KW"/>
</dbReference>
<dbReference type="GO" id="GO:0016887">
    <property type="term" value="F:ATP hydrolysis activity"/>
    <property type="evidence" value="ECO:0007669"/>
    <property type="project" value="InterPro"/>
</dbReference>
<dbReference type="GO" id="GO:0034040">
    <property type="term" value="F:ATPase-coupled lipid transmembrane transporter activity"/>
    <property type="evidence" value="ECO:0000318"/>
    <property type="project" value="GO_Central"/>
</dbReference>
<dbReference type="GO" id="GO:0015562">
    <property type="term" value="F:efflux transmembrane transporter activity"/>
    <property type="evidence" value="ECO:0000315"/>
    <property type="project" value="MTBBASE"/>
</dbReference>
<dbReference type="GO" id="GO:0046677">
    <property type="term" value="P:response to antibiotic"/>
    <property type="evidence" value="ECO:0007669"/>
    <property type="project" value="UniProtKB-KW"/>
</dbReference>
<dbReference type="GO" id="GO:0055085">
    <property type="term" value="P:transmembrane transport"/>
    <property type="evidence" value="ECO:0000318"/>
    <property type="project" value="GO_Central"/>
</dbReference>
<dbReference type="GO" id="GO:1990961">
    <property type="term" value="P:xenobiotic detoxification by transmembrane export across the plasma membrane"/>
    <property type="evidence" value="ECO:0000315"/>
    <property type="project" value="MTBBASE"/>
</dbReference>
<dbReference type="CDD" id="cd18543">
    <property type="entry name" value="ABC_6TM_Rv0194_D1_like"/>
    <property type="match status" value="1"/>
</dbReference>
<dbReference type="CDD" id="cd18546">
    <property type="entry name" value="ABC_6TM_Rv0194_D2_like"/>
    <property type="match status" value="1"/>
</dbReference>
<dbReference type="FunFam" id="3.40.50.300:FF:000299">
    <property type="entry name" value="ABC transporter ATP-binding protein/permease"/>
    <property type="match status" value="2"/>
</dbReference>
<dbReference type="Gene3D" id="1.20.1560.10">
    <property type="entry name" value="ABC transporter type 1, transmembrane domain"/>
    <property type="match status" value="2"/>
</dbReference>
<dbReference type="Gene3D" id="3.40.50.300">
    <property type="entry name" value="P-loop containing nucleotide triphosphate hydrolases"/>
    <property type="match status" value="2"/>
</dbReference>
<dbReference type="InterPro" id="IPR003593">
    <property type="entry name" value="AAA+_ATPase"/>
</dbReference>
<dbReference type="InterPro" id="IPR011527">
    <property type="entry name" value="ABC1_TM_dom"/>
</dbReference>
<dbReference type="InterPro" id="IPR036640">
    <property type="entry name" value="ABC1_TM_sf"/>
</dbReference>
<dbReference type="InterPro" id="IPR003439">
    <property type="entry name" value="ABC_transporter-like_ATP-bd"/>
</dbReference>
<dbReference type="InterPro" id="IPR017871">
    <property type="entry name" value="ABC_transporter-like_CS"/>
</dbReference>
<dbReference type="InterPro" id="IPR027417">
    <property type="entry name" value="P-loop_NTPase"/>
</dbReference>
<dbReference type="InterPro" id="IPR039421">
    <property type="entry name" value="Type_1_exporter"/>
</dbReference>
<dbReference type="PANTHER" id="PTHR43394:SF1">
    <property type="entry name" value="ATP-BINDING CASSETTE SUB-FAMILY B MEMBER 10, MITOCHONDRIAL"/>
    <property type="match status" value="1"/>
</dbReference>
<dbReference type="PANTHER" id="PTHR43394">
    <property type="entry name" value="ATP-DEPENDENT PERMEASE MDL1, MITOCHONDRIAL"/>
    <property type="match status" value="1"/>
</dbReference>
<dbReference type="Pfam" id="PF00664">
    <property type="entry name" value="ABC_membrane"/>
    <property type="match status" value="2"/>
</dbReference>
<dbReference type="Pfam" id="PF00005">
    <property type="entry name" value="ABC_tran"/>
    <property type="match status" value="2"/>
</dbReference>
<dbReference type="SMART" id="SM00382">
    <property type="entry name" value="AAA"/>
    <property type="match status" value="2"/>
</dbReference>
<dbReference type="SUPFAM" id="SSF90123">
    <property type="entry name" value="ABC transporter transmembrane region"/>
    <property type="match status" value="2"/>
</dbReference>
<dbReference type="SUPFAM" id="SSF52540">
    <property type="entry name" value="P-loop containing nucleoside triphosphate hydrolases"/>
    <property type="match status" value="2"/>
</dbReference>
<dbReference type="PROSITE" id="PS50929">
    <property type="entry name" value="ABC_TM1F"/>
    <property type="match status" value="2"/>
</dbReference>
<dbReference type="PROSITE" id="PS00211">
    <property type="entry name" value="ABC_TRANSPORTER_1"/>
    <property type="match status" value="1"/>
</dbReference>
<dbReference type="PROSITE" id="PS50893">
    <property type="entry name" value="ABC_TRANSPORTER_2"/>
    <property type="match status" value="2"/>
</dbReference>
<protein>
    <recommendedName>
        <fullName evidence="5">Multidrug efflux ATP-binding/permease protein Rv0194</fullName>
        <ecNumber evidence="5">7.6.2.-</ecNumber>
    </recommendedName>
</protein>
<evidence type="ECO:0000255" key="1"/>
<evidence type="ECO:0000255" key="2">
    <source>
        <dbReference type="PROSITE-ProRule" id="PRU00434"/>
    </source>
</evidence>
<evidence type="ECO:0000255" key="3">
    <source>
        <dbReference type="PROSITE-ProRule" id="PRU00441"/>
    </source>
</evidence>
<evidence type="ECO:0000269" key="4">
    <source>
    </source>
</evidence>
<evidence type="ECO:0000305" key="5"/>
<evidence type="ECO:0000312" key="6">
    <source>
        <dbReference type="EMBL" id="AFN48045.1"/>
    </source>
</evidence>
<evidence type="ECO:0000312" key="7">
    <source>
        <dbReference type="EMBL" id="CCP42922.1"/>
    </source>
</evidence>
<evidence type="ECO:0000312" key="8">
    <source>
        <dbReference type="EMBL" id="KBJ41303.1"/>
    </source>
</evidence>
<accession>O53645</accession>
<accession>I6Y740</accession>
<accession>L0T5S9</accession>
<name>MDREP_MYCTU</name>